<sequence>MNKANSFNKEELIACGHGKLFGPNSPRLPVDNMLMMDRIVTINDNGGEFGKGEIVAELDINPDLWFFDCHFITDPVMPGCLGLDAMWQLVGFYLGWEGAEGKGRALGVGEVKFTGQVLPGAKKVTYKLNIKRTIHRKLVMGIADAILEVDGRQIYSATDLKVGVFSDTSTF</sequence>
<evidence type="ECO:0000255" key="1">
    <source>
        <dbReference type="HAMAP-Rule" id="MF_00405"/>
    </source>
</evidence>
<name>FABA_SHEB9</name>
<organism>
    <name type="scientific">Shewanella baltica (strain OS195)</name>
    <dbReference type="NCBI Taxonomy" id="399599"/>
    <lineage>
        <taxon>Bacteria</taxon>
        <taxon>Pseudomonadati</taxon>
        <taxon>Pseudomonadota</taxon>
        <taxon>Gammaproteobacteria</taxon>
        <taxon>Alteromonadales</taxon>
        <taxon>Shewanellaceae</taxon>
        <taxon>Shewanella</taxon>
    </lineage>
</organism>
<reference key="1">
    <citation type="submission" date="2007-11" db="EMBL/GenBank/DDBJ databases">
        <title>Complete sequence of chromosome of Shewanella baltica OS195.</title>
        <authorList>
            <consortium name="US DOE Joint Genome Institute"/>
            <person name="Copeland A."/>
            <person name="Lucas S."/>
            <person name="Lapidus A."/>
            <person name="Barry K."/>
            <person name="Glavina del Rio T."/>
            <person name="Dalin E."/>
            <person name="Tice H."/>
            <person name="Pitluck S."/>
            <person name="Chain P."/>
            <person name="Malfatti S."/>
            <person name="Shin M."/>
            <person name="Vergez L."/>
            <person name="Schmutz J."/>
            <person name="Larimer F."/>
            <person name="Land M."/>
            <person name="Hauser L."/>
            <person name="Kyrpides N."/>
            <person name="Kim E."/>
            <person name="Brettar I."/>
            <person name="Rodrigues J."/>
            <person name="Konstantinidis K."/>
            <person name="Klappenbach J."/>
            <person name="Hofle M."/>
            <person name="Tiedje J."/>
            <person name="Richardson P."/>
        </authorList>
    </citation>
    <scope>NUCLEOTIDE SEQUENCE [LARGE SCALE GENOMIC DNA]</scope>
    <source>
        <strain>OS195</strain>
    </source>
</reference>
<accession>A9L586</accession>
<protein>
    <recommendedName>
        <fullName evidence="1">3-hydroxydecanoyl-[acyl-carrier-protein] dehydratase</fullName>
        <ecNumber evidence="1">4.2.1.59</ecNumber>
    </recommendedName>
    <alternativeName>
        <fullName evidence="1">3-hydroxyacyl-[acyl-carrier-protein] dehydratase FabA</fullName>
    </alternativeName>
    <alternativeName>
        <fullName evidence="1">Beta-hydroxydecanoyl thioester dehydrase</fullName>
    </alternativeName>
    <alternativeName>
        <fullName evidence="1">Trans-2-decenoyl-[acyl-carrier-protein] isomerase</fullName>
        <ecNumber evidence="1">5.3.3.14</ecNumber>
    </alternativeName>
</protein>
<dbReference type="EC" id="4.2.1.59" evidence="1"/>
<dbReference type="EC" id="5.3.3.14" evidence="1"/>
<dbReference type="EMBL" id="CP000891">
    <property type="protein sequence ID" value="ABX49848.1"/>
    <property type="molecule type" value="Genomic_DNA"/>
</dbReference>
<dbReference type="RefSeq" id="WP_006082073.1">
    <property type="nucleotide sequence ID" value="NC_009997.1"/>
</dbReference>
<dbReference type="SMR" id="A9L586"/>
<dbReference type="GeneID" id="11772774"/>
<dbReference type="KEGG" id="sbn:Sbal195_2680"/>
<dbReference type="HOGENOM" id="CLU_097925_0_0_6"/>
<dbReference type="UniPathway" id="UPA00094"/>
<dbReference type="Proteomes" id="UP000000770">
    <property type="component" value="Chromosome"/>
</dbReference>
<dbReference type="GO" id="GO:0005737">
    <property type="term" value="C:cytoplasm"/>
    <property type="evidence" value="ECO:0007669"/>
    <property type="project" value="UniProtKB-SubCell"/>
</dbReference>
<dbReference type="GO" id="GO:0019171">
    <property type="term" value="F:(3R)-hydroxyacyl-[acyl-carrier-protein] dehydratase activity"/>
    <property type="evidence" value="ECO:0007669"/>
    <property type="project" value="UniProtKB-UniRule"/>
</dbReference>
<dbReference type="GO" id="GO:0034017">
    <property type="term" value="F:trans-2-decenoyl-acyl-carrier-protein isomerase activity"/>
    <property type="evidence" value="ECO:0007669"/>
    <property type="project" value="UniProtKB-UniRule"/>
</dbReference>
<dbReference type="GO" id="GO:0006636">
    <property type="term" value="P:unsaturated fatty acid biosynthetic process"/>
    <property type="evidence" value="ECO:0007669"/>
    <property type="project" value="UniProtKB-UniRule"/>
</dbReference>
<dbReference type="CDD" id="cd01287">
    <property type="entry name" value="FabA"/>
    <property type="match status" value="1"/>
</dbReference>
<dbReference type="Gene3D" id="3.10.129.10">
    <property type="entry name" value="Hotdog Thioesterase"/>
    <property type="match status" value="1"/>
</dbReference>
<dbReference type="HAMAP" id="MF_00405">
    <property type="entry name" value="FabA"/>
    <property type="match status" value="1"/>
</dbReference>
<dbReference type="InterPro" id="IPR010083">
    <property type="entry name" value="FabA"/>
</dbReference>
<dbReference type="InterPro" id="IPR013114">
    <property type="entry name" value="FabA_FabZ"/>
</dbReference>
<dbReference type="InterPro" id="IPR029069">
    <property type="entry name" value="HotDog_dom_sf"/>
</dbReference>
<dbReference type="NCBIfam" id="TIGR01749">
    <property type="entry name" value="fabA"/>
    <property type="match status" value="1"/>
</dbReference>
<dbReference type="NCBIfam" id="NF003509">
    <property type="entry name" value="PRK05174.1"/>
    <property type="match status" value="1"/>
</dbReference>
<dbReference type="PANTHER" id="PTHR30272">
    <property type="entry name" value="3-HYDROXYACYL-[ACYL-CARRIER-PROTEIN] DEHYDRATASE"/>
    <property type="match status" value="1"/>
</dbReference>
<dbReference type="PANTHER" id="PTHR30272:SF8">
    <property type="entry name" value="3-HYDROXYDECANOYL-[ACYL-CARRIER-PROTEIN] DEHYDRATASE"/>
    <property type="match status" value="1"/>
</dbReference>
<dbReference type="Pfam" id="PF07977">
    <property type="entry name" value="FabA"/>
    <property type="match status" value="1"/>
</dbReference>
<dbReference type="SUPFAM" id="SSF54637">
    <property type="entry name" value="Thioesterase/thiol ester dehydrase-isomerase"/>
    <property type="match status" value="1"/>
</dbReference>
<keyword id="KW-0963">Cytoplasm</keyword>
<keyword id="KW-0275">Fatty acid biosynthesis</keyword>
<keyword id="KW-0276">Fatty acid metabolism</keyword>
<keyword id="KW-0413">Isomerase</keyword>
<keyword id="KW-0444">Lipid biosynthesis</keyword>
<keyword id="KW-0443">Lipid metabolism</keyword>
<keyword id="KW-0456">Lyase</keyword>
<comment type="function">
    <text evidence="1">Necessary for the introduction of cis unsaturation into fatty acids. Catalyzes the dehydration of (3R)-3-hydroxydecanoyl-ACP to E-(2)-decenoyl-ACP and then its isomerization to Z-(3)-decenoyl-ACP. Can catalyze the dehydratase reaction for beta-hydroxyacyl-ACPs with saturated chain lengths up to 16:0, being most active on intermediate chain length.</text>
</comment>
<comment type="catalytic activity">
    <reaction evidence="1">
        <text>a (3R)-hydroxyacyl-[ACP] = a (2E)-enoyl-[ACP] + H2O</text>
        <dbReference type="Rhea" id="RHEA:13097"/>
        <dbReference type="Rhea" id="RHEA-COMP:9925"/>
        <dbReference type="Rhea" id="RHEA-COMP:9945"/>
        <dbReference type="ChEBI" id="CHEBI:15377"/>
        <dbReference type="ChEBI" id="CHEBI:78784"/>
        <dbReference type="ChEBI" id="CHEBI:78827"/>
        <dbReference type="EC" id="4.2.1.59"/>
    </reaction>
</comment>
<comment type="catalytic activity">
    <reaction evidence="1">
        <text>(3R)-hydroxydecanoyl-[ACP] = (2E)-decenoyl-[ACP] + H2O</text>
        <dbReference type="Rhea" id="RHEA:41860"/>
        <dbReference type="Rhea" id="RHEA-COMP:9638"/>
        <dbReference type="Rhea" id="RHEA-COMP:9639"/>
        <dbReference type="ChEBI" id="CHEBI:15377"/>
        <dbReference type="ChEBI" id="CHEBI:78466"/>
        <dbReference type="ChEBI" id="CHEBI:78467"/>
    </reaction>
</comment>
<comment type="catalytic activity">
    <reaction evidence="1">
        <text>(2E)-decenoyl-[ACP] = (3Z)-decenoyl-[ACP]</text>
        <dbReference type="Rhea" id="RHEA:23568"/>
        <dbReference type="Rhea" id="RHEA-COMP:9639"/>
        <dbReference type="Rhea" id="RHEA-COMP:9927"/>
        <dbReference type="ChEBI" id="CHEBI:78467"/>
        <dbReference type="ChEBI" id="CHEBI:78798"/>
        <dbReference type="EC" id="5.3.3.14"/>
    </reaction>
</comment>
<comment type="pathway">
    <text evidence="1">Lipid metabolism; fatty acid biosynthesis.</text>
</comment>
<comment type="subunit">
    <text evidence="1">Homodimer.</text>
</comment>
<comment type="subcellular location">
    <subcellularLocation>
        <location evidence="1">Cytoplasm</location>
    </subcellularLocation>
</comment>
<comment type="similarity">
    <text evidence="1">Belongs to the thioester dehydratase family. FabA subfamily.</text>
</comment>
<gene>
    <name evidence="1" type="primary">fabA</name>
    <name type="ordered locus">Sbal195_2680</name>
</gene>
<proteinExistence type="inferred from homology"/>
<feature type="chain" id="PRO_1000201210" description="3-hydroxydecanoyl-[acyl-carrier-protein] dehydratase">
    <location>
        <begin position="1"/>
        <end position="171"/>
    </location>
</feature>
<feature type="active site" evidence="1">
    <location>
        <position position="70"/>
    </location>
</feature>